<evidence type="ECO:0000250" key="1">
    <source>
        <dbReference type="UniProtKB" id="Q5QD04"/>
    </source>
</evidence>
<evidence type="ECO:0000255" key="2"/>
<evidence type="ECO:0000255" key="3">
    <source>
        <dbReference type="PROSITE-ProRule" id="PRU00521"/>
    </source>
</evidence>
<evidence type="ECO:0000269" key="4">
    <source>
    </source>
</evidence>
<evidence type="ECO:0000303" key="5">
    <source>
    </source>
</evidence>
<evidence type="ECO:0000303" key="6">
    <source>
    </source>
</evidence>
<evidence type="ECO:0000303" key="7">
    <source>
    </source>
</evidence>
<evidence type="ECO:0000305" key="8"/>
<evidence type="ECO:0000312" key="9">
    <source>
        <dbReference type="HGNC" id="HGNC:4514"/>
    </source>
</evidence>
<keyword id="KW-0025">Alternative splicing</keyword>
<keyword id="KW-1003">Cell membrane</keyword>
<keyword id="KW-1015">Disulfide bond</keyword>
<keyword id="KW-0297">G-protein coupled receptor</keyword>
<keyword id="KW-0325">Glycoprotein</keyword>
<keyword id="KW-0472">Membrane</keyword>
<keyword id="KW-0675">Receptor</keyword>
<keyword id="KW-1185">Reference proteome</keyword>
<keyword id="KW-0807">Transducer</keyword>
<keyword id="KW-0812">Transmembrane</keyword>
<keyword id="KW-1133">Transmembrane helix</keyword>
<gene>
    <name evidence="7 9" type="primary">TAAR2</name>
    <name evidence="5" type="synonym">GPR58</name>
</gene>
<accession>Q9P1P5</accession>
<accession>Q5QD02</accession>
<accession>Q6NWS1</accession>
<accession>Q6NWS2</accession>
<accession>Q6NWS3</accession>
<organism>
    <name type="scientific">Homo sapiens</name>
    <name type="common">Human</name>
    <dbReference type="NCBI Taxonomy" id="9606"/>
    <lineage>
        <taxon>Eukaryota</taxon>
        <taxon>Metazoa</taxon>
        <taxon>Chordata</taxon>
        <taxon>Craniata</taxon>
        <taxon>Vertebrata</taxon>
        <taxon>Euteleostomi</taxon>
        <taxon>Mammalia</taxon>
        <taxon>Eutheria</taxon>
        <taxon>Euarchontoglires</taxon>
        <taxon>Primates</taxon>
        <taxon>Haplorrhini</taxon>
        <taxon>Catarrhini</taxon>
        <taxon>Hominidae</taxon>
        <taxon>Homo</taxon>
    </lineage>
</organism>
<proteinExistence type="evidence at transcript level"/>
<dbReference type="EMBL" id="AF112460">
    <property type="protein sequence ID" value="AAF27278.1"/>
    <property type="molecule type" value="Genomic_DNA"/>
</dbReference>
<dbReference type="EMBL" id="AY703480">
    <property type="protein sequence ID" value="AAV70150.1"/>
    <property type="molecule type" value="mRNA"/>
</dbReference>
<dbReference type="EMBL" id="AY702304">
    <property type="protein sequence ID" value="AAV70122.1"/>
    <property type="molecule type" value="mRNA"/>
</dbReference>
<dbReference type="EMBL" id="AL513524">
    <property type="status" value="NOT_ANNOTATED_CDS"/>
    <property type="molecule type" value="Genomic_DNA"/>
</dbReference>
<dbReference type="EMBL" id="BC067461">
    <property type="protein sequence ID" value="AAH67461.1"/>
    <property type="molecule type" value="mRNA"/>
</dbReference>
<dbReference type="EMBL" id="BC067462">
    <property type="protein sequence ID" value="AAH67462.1"/>
    <property type="molecule type" value="mRNA"/>
</dbReference>
<dbReference type="EMBL" id="BC067463">
    <property type="protein sequence ID" value="AAH67463.1"/>
    <property type="molecule type" value="mRNA"/>
</dbReference>
<dbReference type="CCDS" id="CCDS34541.1">
    <molecule id="Q9P1P5-1"/>
</dbReference>
<dbReference type="CCDS" id="CCDS5157.1">
    <molecule id="Q9P1P5-2"/>
</dbReference>
<dbReference type="RefSeq" id="NP_001028252.1">
    <molecule id="Q9P1P5-1"/>
    <property type="nucleotide sequence ID" value="NM_001033080.1"/>
</dbReference>
<dbReference type="RefSeq" id="NP_055441.2">
    <molecule id="Q9P1P5-2"/>
    <property type="nucleotide sequence ID" value="NM_014626.3"/>
</dbReference>
<dbReference type="SMR" id="Q9P1P5"/>
<dbReference type="BioGRID" id="114702">
    <property type="interactions" value="4"/>
</dbReference>
<dbReference type="FunCoup" id="Q9P1P5">
    <property type="interactions" value="509"/>
</dbReference>
<dbReference type="STRING" id="9606.ENSP00000356908"/>
<dbReference type="ChEMBL" id="CHEMBL4523927"/>
<dbReference type="GlyCosmos" id="Q9P1P5">
    <property type="glycosylation" value="3 sites, No reported glycans"/>
</dbReference>
<dbReference type="GlyGen" id="Q9P1P5">
    <property type="glycosylation" value="3 sites"/>
</dbReference>
<dbReference type="iPTMnet" id="Q9P1P5"/>
<dbReference type="PhosphoSitePlus" id="Q9P1P5"/>
<dbReference type="BioMuta" id="TAAR2"/>
<dbReference type="DMDM" id="82592527"/>
<dbReference type="jPOST" id="Q9P1P5"/>
<dbReference type="PaxDb" id="9606-ENSP00000356908"/>
<dbReference type="Antibodypedia" id="19711">
    <property type="antibodies" value="99 antibodies from 24 providers"/>
</dbReference>
<dbReference type="DNASU" id="9287"/>
<dbReference type="Ensembl" id="ENST00000275191.2">
    <molecule id="Q9P1P5-2"/>
    <property type="protein sequence ID" value="ENSP00000275191.2"/>
    <property type="gene ID" value="ENSG00000146378.6"/>
</dbReference>
<dbReference type="Ensembl" id="ENST00000367931.1">
    <molecule id="Q9P1P5-1"/>
    <property type="protein sequence ID" value="ENSP00000356908.1"/>
    <property type="gene ID" value="ENSG00000146378.6"/>
</dbReference>
<dbReference type="GeneID" id="9287"/>
<dbReference type="KEGG" id="hsa:9287"/>
<dbReference type="MANE-Select" id="ENST00000367931.1">
    <property type="protein sequence ID" value="ENSP00000356908.1"/>
    <property type="RefSeq nucleotide sequence ID" value="NM_001033080.1"/>
    <property type="RefSeq protein sequence ID" value="NP_001028252.1"/>
</dbReference>
<dbReference type="UCSC" id="uc003qdl.1">
    <molecule id="Q9P1P5-1"/>
    <property type="organism name" value="human"/>
</dbReference>
<dbReference type="AGR" id="HGNC:4514"/>
<dbReference type="CTD" id="9287"/>
<dbReference type="DisGeNET" id="9287"/>
<dbReference type="GeneCards" id="TAAR2"/>
<dbReference type="HGNC" id="HGNC:4514">
    <property type="gene designation" value="TAAR2"/>
</dbReference>
<dbReference type="HPA" id="ENSG00000146378">
    <property type="expression patterns" value="Not detected"/>
</dbReference>
<dbReference type="MIM" id="604849">
    <property type="type" value="gene"/>
</dbReference>
<dbReference type="neXtProt" id="NX_Q9P1P5"/>
<dbReference type="OpenTargets" id="ENSG00000146378"/>
<dbReference type="PharmGKB" id="PA28903"/>
<dbReference type="VEuPathDB" id="HostDB:ENSG00000146378"/>
<dbReference type="eggNOG" id="KOG3656">
    <property type="taxonomic scope" value="Eukaryota"/>
</dbReference>
<dbReference type="GeneTree" id="ENSGT00940000161475"/>
<dbReference type="HOGENOM" id="CLU_009579_11_0_1"/>
<dbReference type="InParanoid" id="Q9P1P5"/>
<dbReference type="OMA" id="NCWYFGM"/>
<dbReference type="OrthoDB" id="10042731at2759"/>
<dbReference type="PAN-GO" id="Q9P1P5">
    <property type="GO annotations" value="1 GO annotation based on evolutionary models"/>
</dbReference>
<dbReference type="PhylomeDB" id="Q9P1P5"/>
<dbReference type="TreeFam" id="TF343107"/>
<dbReference type="PathwayCommons" id="Q9P1P5"/>
<dbReference type="Reactome" id="R-HSA-375280">
    <property type="pathway name" value="Amine ligand-binding receptors"/>
</dbReference>
<dbReference type="Reactome" id="R-HSA-418555">
    <property type="pathway name" value="G alpha (s) signalling events"/>
</dbReference>
<dbReference type="BioGRID-ORCS" id="9287">
    <property type="hits" value="7 hits in 1139 CRISPR screens"/>
</dbReference>
<dbReference type="GeneWiki" id="TAAR2"/>
<dbReference type="GenomeRNAi" id="9287"/>
<dbReference type="Pharos" id="Q9P1P5">
    <property type="development level" value="Tbio"/>
</dbReference>
<dbReference type="PRO" id="PR:Q9P1P5"/>
<dbReference type="Proteomes" id="UP000005640">
    <property type="component" value="Chromosome 6"/>
</dbReference>
<dbReference type="RNAct" id="Q9P1P5">
    <property type="molecule type" value="protein"/>
</dbReference>
<dbReference type="Bgee" id="ENSG00000146378">
    <property type="expression patterns" value="Expressed in male germ line stem cell (sensu Vertebrata) in testis and 7 other cell types or tissues"/>
</dbReference>
<dbReference type="GO" id="GO:0005886">
    <property type="term" value="C:plasma membrane"/>
    <property type="evidence" value="ECO:0000318"/>
    <property type="project" value="GO_Central"/>
</dbReference>
<dbReference type="GO" id="GO:0004930">
    <property type="term" value="F:G protein-coupled receptor activity"/>
    <property type="evidence" value="ECO:0000304"/>
    <property type="project" value="ProtInc"/>
</dbReference>
<dbReference type="GO" id="GO:0001594">
    <property type="term" value="F:trace-amine receptor activity"/>
    <property type="evidence" value="ECO:0000318"/>
    <property type="project" value="GO_Central"/>
</dbReference>
<dbReference type="GO" id="GO:0007186">
    <property type="term" value="P:G protein-coupled receptor signaling pathway"/>
    <property type="evidence" value="ECO:0000318"/>
    <property type="project" value="GO_Central"/>
</dbReference>
<dbReference type="CDD" id="cd15312">
    <property type="entry name" value="7tmA_TAAR2_3_4"/>
    <property type="match status" value="1"/>
</dbReference>
<dbReference type="FunFam" id="1.20.1070.10:FF:000030">
    <property type="entry name" value="trace amine-associated receptor 1"/>
    <property type="match status" value="1"/>
</dbReference>
<dbReference type="Gene3D" id="1.20.1070.10">
    <property type="entry name" value="Rhodopsin 7-helix transmembrane proteins"/>
    <property type="match status" value="1"/>
</dbReference>
<dbReference type="InterPro" id="IPR000276">
    <property type="entry name" value="GPCR_Rhodpsn"/>
</dbReference>
<dbReference type="InterPro" id="IPR017452">
    <property type="entry name" value="GPCR_Rhodpsn_7TM"/>
</dbReference>
<dbReference type="InterPro" id="IPR050569">
    <property type="entry name" value="TAAR"/>
</dbReference>
<dbReference type="InterPro" id="IPR009132">
    <property type="entry name" value="TAAR_fam"/>
</dbReference>
<dbReference type="PANTHER" id="PTHR24249">
    <property type="entry name" value="HISTAMINE RECEPTOR-RELATED G-PROTEIN COUPLED RECEPTOR"/>
    <property type="match status" value="1"/>
</dbReference>
<dbReference type="PANTHER" id="PTHR24249:SF413">
    <property type="entry name" value="TRACE AMINE-ASSOCIATED RECEPTOR 2"/>
    <property type="match status" value="1"/>
</dbReference>
<dbReference type="Pfam" id="PF00001">
    <property type="entry name" value="7tm_1"/>
    <property type="match status" value="1"/>
</dbReference>
<dbReference type="PRINTS" id="PR00237">
    <property type="entry name" value="GPCRRHODOPSN"/>
</dbReference>
<dbReference type="PRINTS" id="PR01830">
    <property type="entry name" value="TRACEAMINER"/>
</dbReference>
<dbReference type="SMART" id="SM01381">
    <property type="entry name" value="7TM_GPCR_Srsx"/>
    <property type="match status" value="1"/>
</dbReference>
<dbReference type="SUPFAM" id="SSF81321">
    <property type="entry name" value="Family A G protein-coupled receptor-like"/>
    <property type="match status" value="1"/>
</dbReference>
<dbReference type="PROSITE" id="PS00237">
    <property type="entry name" value="G_PROTEIN_RECEP_F1_1"/>
    <property type="match status" value="1"/>
</dbReference>
<dbReference type="PROSITE" id="PS50262">
    <property type="entry name" value="G_PROTEIN_RECEP_F1_2"/>
    <property type="match status" value="1"/>
</dbReference>
<reference key="1">
    <citation type="journal article" date="2000" name="Biochim. Biophys. Acta">
        <title>Cloning and characterization of additional members of the G protein-coupled receptor family.</title>
        <authorList>
            <person name="Lee D.K."/>
            <person name="Lynch K.R."/>
            <person name="Nguyen T."/>
            <person name="Im D.-S."/>
            <person name="Cheng R."/>
            <person name="Saldivia V.R."/>
            <person name="Liu Y."/>
            <person name="Liu I.S.C."/>
            <person name="Heng H.H.Q."/>
            <person name="Seeman P."/>
            <person name="George S.R."/>
            <person name="O'Dowd B.F."/>
            <person name="Marchese A."/>
        </authorList>
    </citation>
    <scope>NUCLEOTIDE SEQUENCE [GENOMIC DNA]</scope>
    <scope>TISSUE SPECIFICITY</scope>
</reference>
<reference key="2">
    <citation type="journal article" date="2005" name="Genomics">
        <title>Trace amine-associated receptors form structurally and functionally distinct subfamilies of novel G protein-coupled receptors.</title>
        <authorList>
            <person name="Lindemann L."/>
            <person name="Ebeling M."/>
            <person name="Kratochwil N.A."/>
            <person name="Bunzow J.R."/>
            <person name="Grandy D.K."/>
            <person name="Hoener M.C."/>
        </authorList>
    </citation>
    <scope>NUCLEOTIDE SEQUENCE [MRNA] (ISOFORMS 1 AND 2)</scope>
</reference>
<reference key="3">
    <citation type="journal article" date="2003" name="Nature">
        <title>The DNA sequence and analysis of human chromosome 6.</title>
        <authorList>
            <person name="Mungall A.J."/>
            <person name="Palmer S.A."/>
            <person name="Sims S.K."/>
            <person name="Edwards C.A."/>
            <person name="Ashurst J.L."/>
            <person name="Wilming L."/>
            <person name="Jones M.C."/>
            <person name="Horton R."/>
            <person name="Hunt S.E."/>
            <person name="Scott C.E."/>
            <person name="Gilbert J.G.R."/>
            <person name="Clamp M.E."/>
            <person name="Bethel G."/>
            <person name="Milne S."/>
            <person name="Ainscough R."/>
            <person name="Almeida J.P."/>
            <person name="Ambrose K.D."/>
            <person name="Andrews T.D."/>
            <person name="Ashwell R.I.S."/>
            <person name="Babbage A.K."/>
            <person name="Bagguley C.L."/>
            <person name="Bailey J."/>
            <person name="Banerjee R."/>
            <person name="Barker D.J."/>
            <person name="Barlow K.F."/>
            <person name="Bates K."/>
            <person name="Beare D.M."/>
            <person name="Beasley H."/>
            <person name="Beasley O."/>
            <person name="Bird C.P."/>
            <person name="Blakey S.E."/>
            <person name="Bray-Allen S."/>
            <person name="Brook J."/>
            <person name="Brown A.J."/>
            <person name="Brown J.Y."/>
            <person name="Burford D.C."/>
            <person name="Burrill W."/>
            <person name="Burton J."/>
            <person name="Carder C."/>
            <person name="Carter N.P."/>
            <person name="Chapman J.C."/>
            <person name="Clark S.Y."/>
            <person name="Clark G."/>
            <person name="Clee C.M."/>
            <person name="Clegg S."/>
            <person name="Cobley V."/>
            <person name="Collier R.E."/>
            <person name="Collins J.E."/>
            <person name="Colman L.K."/>
            <person name="Corby N.R."/>
            <person name="Coville G.J."/>
            <person name="Culley K.M."/>
            <person name="Dhami P."/>
            <person name="Davies J."/>
            <person name="Dunn M."/>
            <person name="Earthrowl M.E."/>
            <person name="Ellington A.E."/>
            <person name="Evans K.A."/>
            <person name="Faulkner L."/>
            <person name="Francis M.D."/>
            <person name="Frankish A."/>
            <person name="Frankland J."/>
            <person name="French L."/>
            <person name="Garner P."/>
            <person name="Garnett J."/>
            <person name="Ghori M.J."/>
            <person name="Gilby L.M."/>
            <person name="Gillson C.J."/>
            <person name="Glithero R.J."/>
            <person name="Grafham D.V."/>
            <person name="Grant M."/>
            <person name="Gribble S."/>
            <person name="Griffiths C."/>
            <person name="Griffiths M.N.D."/>
            <person name="Hall R."/>
            <person name="Halls K.S."/>
            <person name="Hammond S."/>
            <person name="Harley J.L."/>
            <person name="Hart E.A."/>
            <person name="Heath P.D."/>
            <person name="Heathcott R."/>
            <person name="Holmes S.J."/>
            <person name="Howden P.J."/>
            <person name="Howe K.L."/>
            <person name="Howell G.R."/>
            <person name="Huckle E."/>
            <person name="Humphray S.J."/>
            <person name="Humphries M.D."/>
            <person name="Hunt A.R."/>
            <person name="Johnson C.M."/>
            <person name="Joy A.A."/>
            <person name="Kay M."/>
            <person name="Keenan S.J."/>
            <person name="Kimberley A.M."/>
            <person name="King A."/>
            <person name="Laird G.K."/>
            <person name="Langford C."/>
            <person name="Lawlor S."/>
            <person name="Leongamornlert D.A."/>
            <person name="Leversha M."/>
            <person name="Lloyd C.R."/>
            <person name="Lloyd D.M."/>
            <person name="Loveland J.E."/>
            <person name="Lovell J."/>
            <person name="Martin S."/>
            <person name="Mashreghi-Mohammadi M."/>
            <person name="Maslen G.L."/>
            <person name="Matthews L."/>
            <person name="McCann O.T."/>
            <person name="McLaren S.J."/>
            <person name="McLay K."/>
            <person name="McMurray A."/>
            <person name="Moore M.J.F."/>
            <person name="Mullikin J.C."/>
            <person name="Niblett D."/>
            <person name="Nickerson T."/>
            <person name="Novik K.L."/>
            <person name="Oliver K."/>
            <person name="Overton-Larty E.K."/>
            <person name="Parker A."/>
            <person name="Patel R."/>
            <person name="Pearce A.V."/>
            <person name="Peck A.I."/>
            <person name="Phillimore B.J.C.T."/>
            <person name="Phillips S."/>
            <person name="Plumb R.W."/>
            <person name="Porter K.M."/>
            <person name="Ramsey Y."/>
            <person name="Ranby S.A."/>
            <person name="Rice C.M."/>
            <person name="Ross M.T."/>
            <person name="Searle S.M."/>
            <person name="Sehra H.K."/>
            <person name="Sheridan E."/>
            <person name="Skuce C.D."/>
            <person name="Smith S."/>
            <person name="Smith M."/>
            <person name="Spraggon L."/>
            <person name="Squares S.L."/>
            <person name="Steward C.A."/>
            <person name="Sycamore N."/>
            <person name="Tamlyn-Hall G."/>
            <person name="Tester J."/>
            <person name="Theaker A.J."/>
            <person name="Thomas D.W."/>
            <person name="Thorpe A."/>
            <person name="Tracey A."/>
            <person name="Tromans A."/>
            <person name="Tubby B."/>
            <person name="Wall M."/>
            <person name="Wallis J.M."/>
            <person name="West A.P."/>
            <person name="White S.S."/>
            <person name="Whitehead S.L."/>
            <person name="Whittaker H."/>
            <person name="Wild A."/>
            <person name="Willey D.J."/>
            <person name="Wilmer T.E."/>
            <person name="Wood J.M."/>
            <person name="Wray P.W."/>
            <person name="Wyatt J.C."/>
            <person name="Young L."/>
            <person name="Younger R.M."/>
            <person name="Bentley D.R."/>
            <person name="Coulson A."/>
            <person name="Durbin R.M."/>
            <person name="Hubbard T."/>
            <person name="Sulston J.E."/>
            <person name="Dunham I."/>
            <person name="Rogers J."/>
            <person name="Beck S."/>
        </authorList>
    </citation>
    <scope>NUCLEOTIDE SEQUENCE [LARGE SCALE GENOMIC DNA]</scope>
</reference>
<reference key="4">
    <citation type="journal article" date="2004" name="Genome Res.">
        <title>The status, quality, and expansion of the NIH full-length cDNA project: the Mammalian Gene Collection (MGC).</title>
        <authorList>
            <consortium name="The MGC Project Team"/>
        </authorList>
    </citation>
    <scope>NUCLEOTIDE SEQUENCE [LARGE SCALE MRNA] (ISOFORM 2)</scope>
</reference>
<comment type="function">
    <text evidence="1">Orphan olfactory receptor specific for trace amines. Trace amine compounds are enriched in animal body fluids and act on trace amine-associated receptors (TAARs) to elicit both intraspecific and interspecific innate behaviors. Ligand-binding causes a conformation change that triggers signaling via the G(s)-class of G-proteins which activate adenylate cyclase.</text>
</comment>
<comment type="subcellular location">
    <subcellularLocation>
        <location evidence="1">Cell membrane</location>
        <topology evidence="2">Multi-pass membrane protein</topology>
    </subcellularLocation>
</comment>
<comment type="alternative products">
    <event type="alternative splicing"/>
    <isoform>
        <id>Q9P1P5-1</id>
        <name>1</name>
        <name>Long</name>
        <sequence type="displayed"/>
    </isoform>
    <isoform>
        <id>Q9P1P5-2</id>
        <name>2</name>
        <name>Small</name>
        <sequence type="described" ref="VSP_016301"/>
    </isoform>
</comment>
<comment type="tissue specificity">
    <text evidence="4">Not expressed in the pons, thalamus, hypothalamus, hippocampus, caudate, putamen, frontal cortex, basal forebrain, midbrain or liver.</text>
</comment>
<comment type="domain">
    <text evidence="1">In addition to the well known disulfide bond common to G-protein coupled receptor 1 family, trace amine-associated receptors (TAARs) contain an unique disulfide bond (Cys-33-Cys-197) connecting the N-terminus to the extracellular Loop 2 (ECL2), which is required for agonist-induced receptor activation.</text>
</comment>
<comment type="similarity">
    <text evidence="3">Belongs to the G-protein coupled receptor 1 family.</text>
</comment>
<protein>
    <recommendedName>
        <fullName evidence="7">Trace amine-associated receptor 2</fullName>
        <shortName>TaR-2</shortName>
        <shortName evidence="7">Trace amine receptor 2</shortName>
    </recommendedName>
    <alternativeName>
        <fullName evidence="5">G-protein coupled receptor 58</fullName>
    </alternativeName>
</protein>
<sequence>MAVSSEQHELSHFKRTQTKKEKFNCSEYGNRSCPENERSLGVRVAMYSFMAGSIFITIFGNLAMIISISYFKQLHTPTNFLILSMAITDFLLGFTIMPYSMIRSVENCWYFGLTFCKIYYSFDLMLSITSIFHLCSVAIDRFYAICYPLLYSTKITIPVIKRLLLLCWSVPGAFAFGVVFSEAYADGIEGYDILVACSSSCPVMFNKLWGTTLFMAGFFTPGSMMVGIYGKIFAVSRKHAHAINNLRENQNNQVKKDKKAAKTLGIVIGVFLLCWFPCFFTILLDPFLNFSTPVVLFDALTWFGYFNSTCNPLIYGFFYPWFRRALKYILLGKIFSSCFHNTILCMQKESE</sequence>
<feature type="chain" id="PRO_0000070146" description="Trace amine-associated receptor 2">
    <location>
        <begin position="1"/>
        <end position="351"/>
    </location>
</feature>
<feature type="topological domain" description="Extracellular" evidence="2">
    <location>
        <begin position="1"/>
        <end position="48"/>
    </location>
</feature>
<feature type="transmembrane region" description="Helical; Name=1" evidence="2">
    <location>
        <begin position="49"/>
        <end position="69"/>
    </location>
</feature>
<feature type="topological domain" description="Cytoplasmic" evidence="2">
    <location>
        <begin position="70"/>
        <end position="79"/>
    </location>
</feature>
<feature type="transmembrane region" description="Helical; Name=2" evidence="2">
    <location>
        <begin position="80"/>
        <end position="100"/>
    </location>
</feature>
<feature type="topological domain" description="Extracellular" evidence="2">
    <location>
        <begin position="101"/>
        <end position="118"/>
    </location>
</feature>
<feature type="transmembrane region" description="Helical; Name=3" evidence="2">
    <location>
        <begin position="119"/>
        <end position="139"/>
    </location>
</feature>
<feature type="topological domain" description="Cytoplasmic" evidence="2">
    <location>
        <begin position="140"/>
        <end position="162"/>
    </location>
</feature>
<feature type="transmembrane region" description="Helical; Name=4" evidence="2">
    <location>
        <begin position="163"/>
        <end position="183"/>
    </location>
</feature>
<feature type="topological domain" description="Extracellular" evidence="2">
    <location>
        <begin position="184"/>
        <end position="207"/>
    </location>
</feature>
<feature type="transmembrane region" description="Helical; Name=5" evidence="2">
    <location>
        <begin position="208"/>
        <end position="228"/>
    </location>
</feature>
<feature type="topological domain" description="Cytoplasmic" evidence="2">
    <location>
        <begin position="229"/>
        <end position="263"/>
    </location>
</feature>
<feature type="transmembrane region" description="Helical; Name=6" evidence="2">
    <location>
        <begin position="264"/>
        <end position="284"/>
    </location>
</feature>
<feature type="topological domain" description="Extracellular" evidence="2">
    <location>
        <begin position="285"/>
        <end position="299"/>
    </location>
</feature>
<feature type="transmembrane region" description="Helical; Name=7" evidence="2">
    <location>
        <begin position="300"/>
        <end position="322"/>
    </location>
</feature>
<feature type="topological domain" description="Cytoplasmic" evidence="2">
    <location>
        <begin position="323"/>
        <end position="351"/>
    </location>
</feature>
<feature type="glycosylation site" description="N-linked (GlcNAc...) asparagine" evidence="2">
    <location>
        <position position="24"/>
    </location>
</feature>
<feature type="glycosylation site" description="N-linked (GlcNAc...) asparagine" evidence="2">
    <location>
        <position position="30"/>
    </location>
</feature>
<feature type="glycosylation site" description="N-linked (GlcNAc...) asparagine" evidence="2">
    <location>
        <position position="289"/>
    </location>
</feature>
<feature type="disulfide bond" evidence="1">
    <location>
        <begin position="33"/>
        <end position="197"/>
    </location>
</feature>
<feature type="disulfide bond" evidence="3">
    <location>
        <begin position="116"/>
        <end position="201"/>
    </location>
</feature>
<feature type="splice variant" id="VSP_016301" description="In isoform 2." evidence="6 7">
    <location>
        <begin position="1"/>
        <end position="45"/>
    </location>
</feature>
<feature type="sequence conflict" description="In Ref. 1; AAF27278." evidence="8" ref="1">
    <original>V</original>
    <variation>A</variation>
    <location>
        <position position="178"/>
    </location>
</feature>
<feature type="sequence conflict" description="In Ref. 4; AAH67463." evidence="8" ref="4">
    <original>T</original>
    <variation>K</variation>
    <location>
        <position position="301"/>
    </location>
</feature>
<feature type="sequence conflict" description="In Ref. 4; AAH67462." evidence="8" ref="4">
    <original>I</original>
    <variation>V</variation>
    <location>
        <position position="329"/>
    </location>
</feature>
<name>TAAR2_HUMAN</name>